<protein>
    <recommendedName>
        <fullName evidence="2">L-lactate dehydrogenase 1</fullName>
        <shortName evidence="2">L-LDH 1</shortName>
        <ecNumber evidence="2">1.1.1.27</ecNumber>
    </recommendedName>
</protein>
<keyword id="KW-0021">Allosteric enzyme</keyword>
<keyword id="KW-0963">Cytoplasm</keyword>
<keyword id="KW-0520">NAD</keyword>
<keyword id="KW-0560">Oxidoreductase</keyword>
<keyword id="KW-0597">Phosphoprotein</keyword>
<keyword id="KW-1185">Reference proteome</keyword>
<accession>Q01462</accession>
<name>LDH1_LACLA</name>
<organism>
    <name type="scientific">Lactococcus lactis subsp. lactis (strain IL1403)</name>
    <name type="common">Streptococcus lactis</name>
    <dbReference type="NCBI Taxonomy" id="272623"/>
    <lineage>
        <taxon>Bacteria</taxon>
        <taxon>Bacillati</taxon>
        <taxon>Bacillota</taxon>
        <taxon>Bacilli</taxon>
        <taxon>Lactobacillales</taxon>
        <taxon>Streptococcaceae</taxon>
        <taxon>Lactococcus</taxon>
    </lineage>
</organism>
<reference key="1">
    <citation type="journal article" date="1992" name="J. Bacteriol.">
        <title>Cloning, nucleotide sequence, expression, and chromosomal location of ldh, the gene encoding L-(+)-lactate dehydrogenase, from Lactococcus lactis.</title>
        <authorList>
            <person name="Llanos R.M."/>
            <person name="Hillier A.J."/>
            <person name="Davidson B.E."/>
        </authorList>
    </citation>
    <scope>NUCLEOTIDE SEQUENCE [GENOMIC DNA]</scope>
    <source>
        <strain>LM0230</strain>
    </source>
</reference>
<reference key="2">
    <citation type="journal article" date="1992" name="Gene">
        <title>Cloning and sequence analysis of the gene encoding L-lactate dehydrogenase from Lactococcus lactis: evolutionary relationships between 21 different LDH enzymes.</title>
        <authorList>
            <person name="Griffin H.G."/>
            <person name="Swindell S.R."/>
            <person name="Gasson M.G."/>
        </authorList>
    </citation>
    <scope>NUCLEOTIDE SEQUENCE [GENOMIC DNA]</scope>
</reference>
<reference key="3">
    <citation type="journal article" date="1994" name="Microbiology">
        <title>Cloning, sequencing and comparison of three lactococcal L-lactate dehydrogenase genes.</title>
        <authorList>
            <person name="Swindell S.R."/>
            <person name="Griffin H.G."/>
            <person name="Gasson M.J."/>
        </authorList>
    </citation>
    <scope>NUCLEOTIDE SEQUENCE [GENOMIC DNA]</scope>
    <source>
        <strain>BU2-60</strain>
        <strain>IL1403</strain>
    </source>
</reference>
<reference key="4">
    <citation type="journal article" date="1997" name="Appl. Environ. Microbiol.">
        <title>The ldh phylogeny for environmental isolates of Lactococcus lactis is consistent with rRNA genotypes but not with phenotypes.</title>
        <authorList>
            <person name="Urbach E."/>
            <person name="Daniels B."/>
            <person name="Salama M.S."/>
            <person name="Sandine W.E."/>
            <person name="Giovannoni S.J."/>
        </authorList>
    </citation>
    <scope>NUCLEOTIDE SEQUENCE [GENOMIC DNA]</scope>
    <source>
        <strain>1117M</strain>
        <strain>112</strain>
        <strain>BEN121</strain>
        <strain>BO34</strain>
    </source>
</reference>
<reference key="5">
    <citation type="journal article" date="2001" name="Genome Res.">
        <title>The complete genome sequence of the lactic acid bacterium Lactococcus lactis ssp. lactis IL1403.</title>
        <authorList>
            <person name="Bolotin A."/>
            <person name="Wincker P."/>
            <person name="Mauger S."/>
            <person name="Jaillon O."/>
            <person name="Malarme K."/>
            <person name="Weissenbach J."/>
            <person name="Ehrlich S.D."/>
            <person name="Sorokin A."/>
        </authorList>
    </citation>
    <scope>NUCLEOTIDE SEQUENCE [LARGE SCALE GENOMIC DNA]</scope>
    <source>
        <strain>IL1403</strain>
    </source>
</reference>
<evidence type="ECO:0000250" key="1"/>
<evidence type="ECO:0000255" key="2">
    <source>
        <dbReference type="HAMAP-Rule" id="MF_00488"/>
    </source>
</evidence>
<evidence type="ECO:0000305" key="3"/>
<feature type="initiator methionine" description="Removed" evidence="1">
    <location>
        <position position="1"/>
    </location>
</feature>
<feature type="chain" id="PRO_0000168351" description="L-lactate dehydrogenase 1">
    <location>
        <begin position="2"/>
        <end position="325"/>
    </location>
</feature>
<feature type="active site" description="Proton acceptor" evidence="2">
    <location>
        <position position="178"/>
    </location>
</feature>
<feature type="binding site" evidence="2">
    <location>
        <position position="17"/>
    </location>
    <ligand>
        <name>NAD(+)</name>
        <dbReference type="ChEBI" id="CHEBI:57540"/>
    </ligand>
</feature>
<feature type="binding site" evidence="2">
    <location>
        <position position="38"/>
    </location>
    <ligand>
        <name>NAD(+)</name>
        <dbReference type="ChEBI" id="CHEBI:57540"/>
    </ligand>
</feature>
<feature type="binding site" evidence="2">
    <location>
        <position position="43"/>
    </location>
    <ligand>
        <name>NAD(+)</name>
        <dbReference type="ChEBI" id="CHEBI:57540"/>
    </ligand>
</feature>
<feature type="binding site" evidence="2">
    <location>
        <position position="68"/>
    </location>
    <ligand>
        <name>NAD(+)</name>
        <dbReference type="ChEBI" id="CHEBI:57540"/>
    </ligand>
</feature>
<feature type="binding site" evidence="2">
    <location>
        <begin position="82"/>
        <end position="83"/>
    </location>
    <ligand>
        <name>NAD(+)</name>
        <dbReference type="ChEBI" id="CHEBI:57540"/>
    </ligand>
</feature>
<feature type="binding site" evidence="2">
    <location>
        <position position="85"/>
    </location>
    <ligand>
        <name>substrate</name>
    </ligand>
</feature>
<feature type="binding site" evidence="2">
    <location>
        <position position="91"/>
    </location>
    <ligand>
        <name>substrate</name>
    </ligand>
</feature>
<feature type="binding site" evidence="2">
    <location>
        <begin position="121"/>
        <end position="123"/>
    </location>
    <ligand>
        <name>NAD(+)</name>
        <dbReference type="ChEBI" id="CHEBI:57540"/>
    </ligand>
</feature>
<feature type="binding site" evidence="2">
    <location>
        <begin position="123"/>
        <end position="126"/>
    </location>
    <ligand>
        <name>substrate</name>
    </ligand>
</feature>
<feature type="binding site" evidence="2">
    <location>
        <position position="146"/>
    </location>
    <ligand>
        <name>NAD(+)</name>
        <dbReference type="ChEBI" id="CHEBI:57540"/>
    </ligand>
</feature>
<feature type="binding site" evidence="2">
    <location>
        <begin position="151"/>
        <end position="154"/>
    </location>
    <ligand>
        <name>substrate</name>
    </ligand>
</feature>
<feature type="binding site" evidence="2">
    <location>
        <position position="156"/>
    </location>
    <ligand>
        <name>beta-D-fructose 1,6-bisphosphate</name>
        <dbReference type="ChEBI" id="CHEBI:32966"/>
        <note>allosteric activator</note>
    </ligand>
</feature>
<feature type="binding site" evidence="2">
    <location>
        <position position="171"/>
    </location>
    <ligand>
        <name>beta-D-fructose 1,6-bisphosphate</name>
        <dbReference type="ChEBI" id="CHEBI:32966"/>
        <note>allosteric activator</note>
    </ligand>
</feature>
<feature type="binding site" evidence="2">
    <location>
        <position position="232"/>
    </location>
    <ligand>
        <name>substrate</name>
    </ligand>
</feature>
<feature type="modified residue" description="Phosphotyrosine" evidence="2">
    <location>
        <position position="223"/>
    </location>
</feature>
<feature type="sequence conflict" description="In Ref. 1; AAA25172/AAA99896 and 4; AAB51678." evidence="3" ref="1 4">
    <original>C</original>
    <variation>F</variation>
    <location>
        <position position="270"/>
    </location>
</feature>
<dbReference type="EC" id="1.1.1.27" evidence="2"/>
<dbReference type="EMBL" id="M95919">
    <property type="protein sequence ID" value="AAA25172.1"/>
    <property type="molecule type" value="Genomic_DNA"/>
</dbReference>
<dbReference type="EMBL" id="M88490">
    <property type="protein sequence ID" value="AAA25187.1"/>
    <property type="molecule type" value="Genomic_DNA"/>
</dbReference>
<dbReference type="EMBL" id="L07920">
    <property type="protein sequence ID" value="AAA99896.1"/>
    <property type="molecule type" value="Genomic_DNA"/>
</dbReference>
<dbReference type="EMBL" id="U04315">
    <property type="protein sequence ID" value="AAA61963.1"/>
    <property type="molecule type" value="Genomic_DNA"/>
</dbReference>
<dbReference type="EMBL" id="U02386">
    <property type="protein sequence ID" value="AAA61962.1"/>
    <property type="molecule type" value="Genomic_DNA"/>
</dbReference>
<dbReference type="EMBL" id="U78632">
    <property type="protein sequence ID" value="AAB51676.1"/>
    <property type="molecule type" value="Genomic_DNA"/>
</dbReference>
<dbReference type="EMBL" id="U78636">
    <property type="protein sequence ID" value="AAB51680.1"/>
    <property type="molecule type" value="Genomic_DNA"/>
</dbReference>
<dbReference type="EMBL" id="U78637">
    <property type="protein sequence ID" value="AAB51681.1"/>
    <property type="molecule type" value="Genomic_DNA"/>
</dbReference>
<dbReference type="EMBL" id="U78638">
    <property type="protein sequence ID" value="AAB51682.1"/>
    <property type="molecule type" value="Genomic_DNA"/>
</dbReference>
<dbReference type="EMBL" id="U78634">
    <property type="protein sequence ID" value="AAB51678.1"/>
    <property type="molecule type" value="Genomic_DNA"/>
</dbReference>
<dbReference type="EMBL" id="AE005176">
    <property type="protein sequence ID" value="AAK05429.1"/>
    <property type="molecule type" value="Genomic_DNA"/>
</dbReference>
<dbReference type="PIR" id="A45246">
    <property type="entry name" value="A45246"/>
</dbReference>
<dbReference type="PIR" id="C86791">
    <property type="entry name" value="C86791"/>
</dbReference>
<dbReference type="PIR" id="JN0449">
    <property type="entry name" value="JN0449"/>
</dbReference>
<dbReference type="RefSeq" id="NP_267487.1">
    <property type="nucleotide sequence ID" value="NC_002662.1"/>
</dbReference>
<dbReference type="RefSeq" id="WP_003131075.1">
    <property type="nucleotide sequence ID" value="NC_002662.1"/>
</dbReference>
<dbReference type="SMR" id="Q01462"/>
<dbReference type="PaxDb" id="272623-L0017"/>
<dbReference type="EnsemblBacteria" id="AAK05429">
    <property type="protein sequence ID" value="AAK05429"/>
    <property type="gene ID" value="L0017"/>
</dbReference>
<dbReference type="KEGG" id="lla:L0017"/>
<dbReference type="PATRIC" id="fig|272623.7.peg.1438"/>
<dbReference type="eggNOG" id="COG0039">
    <property type="taxonomic scope" value="Bacteria"/>
</dbReference>
<dbReference type="HOGENOM" id="CLU_045401_1_1_9"/>
<dbReference type="OrthoDB" id="9802969at2"/>
<dbReference type="SABIO-RK" id="Q01462"/>
<dbReference type="UniPathway" id="UPA00554">
    <property type="reaction ID" value="UER00611"/>
</dbReference>
<dbReference type="Proteomes" id="UP000002196">
    <property type="component" value="Chromosome"/>
</dbReference>
<dbReference type="GO" id="GO:0005737">
    <property type="term" value="C:cytoplasm"/>
    <property type="evidence" value="ECO:0007669"/>
    <property type="project" value="UniProtKB-SubCell"/>
</dbReference>
<dbReference type="GO" id="GO:0004459">
    <property type="term" value="F:L-lactate dehydrogenase activity"/>
    <property type="evidence" value="ECO:0007669"/>
    <property type="project" value="UniProtKB-UniRule"/>
</dbReference>
<dbReference type="GO" id="GO:0006096">
    <property type="term" value="P:glycolytic process"/>
    <property type="evidence" value="ECO:0007669"/>
    <property type="project" value="UniProtKB-UniRule"/>
</dbReference>
<dbReference type="GO" id="GO:0006089">
    <property type="term" value="P:lactate metabolic process"/>
    <property type="evidence" value="ECO:0007669"/>
    <property type="project" value="TreeGrafter"/>
</dbReference>
<dbReference type="CDD" id="cd05291">
    <property type="entry name" value="HicDH_like"/>
    <property type="match status" value="1"/>
</dbReference>
<dbReference type="FunFam" id="3.40.50.720:FF:000018">
    <property type="entry name" value="Malate dehydrogenase"/>
    <property type="match status" value="1"/>
</dbReference>
<dbReference type="Gene3D" id="3.90.110.10">
    <property type="entry name" value="Lactate dehydrogenase/glycoside hydrolase, family 4, C-terminal"/>
    <property type="match status" value="1"/>
</dbReference>
<dbReference type="Gene3D" id="3.40.50.720">
    <property type="entry name" value="NAD(P)-binding Rossmann-like Domain"/>
    <property type="match status" value="1"/>
</dbReference>
<dbReference type="HAMAP" id="MF_00488">
    <property type="entry name" value="Lactate_dehydrog"/>
    <property type="match status" value="1"/>
</dbReference>
<dbReference type="InterPro" id="IPR001557">
    <property type="entry name" value="L-lactate/malate_DH"/>
</dbReference>
<dbReference type="InterPro" id="IPR011304">
    <property type="entry name" value="L-lactate_DH"/>
</dbReference>
<dbReference type="InterPro" id="IPR018177">
    <property type="entry name" value="L-lactate_DH_AS"/>
</dbReference>
<dbReference type="InterPro" id="IPR022383">
    <property type="entry name" value="Lactate/malate_DH_C"/>
</dbReference>
<dbReference type="InterPro" id="IPR001236">
    <property type="entry name" value="Lactate/malate_DH_N"/>
</dbReference>
<dbReference type="InterPro" id="IPR015955">
    <property type="entry name" value="Lactate_DH/Glyco_Ohase_4_C"/>
</dbReference>
<dbReference type="InterPro" id="IPR036291">
    <property type="entry name" value="NAD(P)-bd_dom_sf"/>
</dbReference>
<dbReference type="NCBIfam" id="TIGR01771">
    <property type="entry name" value="L-LDH-NAD"/>
    <property type="match status" value="1"/>
</dbReference>
<dbReference type="NCBIfam" id="NF000824">
    <property type="entry name" value="PRK00066.1"/>
    <property type="match status" value="1"/>
</dbReference>
<dbReference type="PANTHER" id="PTHR43128">
    <property type="entry name" value="L-2-HYDROXYCARBOXYLATE DEHYDROGENASE (NAD(P)(+))"/>
    <property type="match status" value="1"/>
</dbReference>
<dbReference type="PANTHER" id="PTHR43128:SF16">
    <property type="entry name" value="L-LACTATE DEHYDROGENASE"/>
    <property type="match status" value="1"/>
</dbReference>
<dbReference type="Pfam" id="PF02866">
    <property type="entry name" value="Ldh_1_C"/>
    <property type="match status" value="1"/>
</dbReference>
<dbReference type="Pfam" id="PF00056">
    <property type="entry name" value="Ldh_1_N"/>
    <property type="match status" value="1"/>
</dbReference>
<dbReference type="PIRSF" id="PIRSF000102">
    <property type="entry name" value="Lac_mal_DH"/>
    <property type="match status" value="1"/>
</dbReference>
<dbReference type="PRINTS" id="PR00086">
    <property type="entry name" value="LLDHDRGNASE"/>
</dbReference>
<dbReference type="SUPFAM" id="SSF56327">
    <property type="entry name" value="LDH C-terminal domain-like"/>
    <property type="match status" value="1"/>
</dbReference>
<dbReference type="SUPFAM" id="SSF51735">
    <property type="entry name" value="NAD(P)-binding Rossmann-fold domains"/>
    <property type="match status" value="1"/>
</dbReference>
<dbReference type="PROSITE" id="PS00064">
    <property type="entry name" value="L_LDH"/>
    <property type="match status" value="1"/>
</dbReference>
<sequence>MADKQRKKVILVGDGAVGSSYAFALVNQGIAQELGIVDLFKEKTQGDAEDLSHALAFTSPKKIYSADYSDASDADLVVLTSGAPQKPGETRLDLVEKNLRITKDVVTKIVASGFKGIFLVAANPVDILTYATWKFSGFPKNRVVGSGTSLDTARFRQALAEKVDVDARSIHAYIMGEHGDSEFAVWSHANVAGVKLEQWFQENDYLNEAEIVELFESVRDAAYSIIAKKGATFYGVAVALARITKAILDDEHAVLPVSVFQDGQYGVSDCYLGQPAVVGAEGVVNPIHIPLNDAEMQKMEASGAQLKAIIDEAFAKEEFASAVKN</sequence>
<proteinExistence type="inferred from homology"/>
<gene>
    <name evidence="2" type="primary">ldh1</name>
    <name type="synonym">ldh</name>
    <name type="synonym">ldhA</name>
    <name type="ordered locus">LL1331</name>
    <name type="ORF">L0017</name>
</gene>
<comment type="function">
    <text evidence="2">Catalyzes the conversion of lactate to pyruvate.</text>
</comment>
<comment type="catalytic activity">
    <reaction evidence="2">
        <text>(S)-lactate + NAD(+) = pyruvate + NADH + H(+)</text>
        <dbReference type="Rhea" id="RHEA:23444"/>
        <dbReference type="ChEBI" id="CHEBI:15361"/>
        <dbReference type="ChEBI" id="CHEBI:15378"/>
        <dbReference type="ChEBI" id="CHEBI:16651"/>
        <dbReference type="ChEBI" id="CHEBI:57540"/>
        <dbReference type="ChEBI" id="CHEBI:57945"/>
        <dbReference type="EC" id="1.1.1.27"/>
    </reaction>
</comment>
<comment type="activity regulation">
    <text evidence="2">Allosterically activated by fructose 1,6-bisphosphate (FBP).</text>
</comment>
<comment type="pathway">
    <text evidence="2">Fermentation; pyruvate fermentation to lactate; (S)-lactate from pyruvate: step 1/1.</text>
</comment>
<comment type="subunit">
    <text evidence="2">Homotetramer.</text>
</comment>
<comment type="subcellular location">
    <subcellularLocation>
        <location evidence="2">Cytoplasm</location>
    </subcellularLocation>
</comment>
<comment type="similarity">
    <text evidence="2 3">Belongs to the LDH/MDH superfamily. LDH family.</text>
</comment>